<proteinExistence type="evidence at protein level"/>
<feature type="initiator methionine" description="Removed" evidence="1">
    <location>
        <position position="1"/>
    </location>
</feature>
<feature type="chain" id="PRO_0000132213" description="Small ribosomal subunit protein uS13">
    <location>
        <begin position="2"/>
        <end position="152"/>
    </location>
</feature>
<feature type="modified residue" description="N-acetylserine" evidence="1">
    <location>
        <position position="2"/>
    </location>
</feature>
<feature type="modified residue" description="N6-acetyllysine; alternate" evidence="1">
    <location>
        <position position="94"/>
    </location>
</feature>
<feature type="modified residue" description="N6-acetyllysine; alternate" evidence="1">
    <location>
        <position position="106"/>
    </location>
</feature>
<feature type="cross-link" description="Glycyl lysine isopeptide (Lys-Gly) (interchain with G-Cter in SUMO2)" evidence="1">
    <location>
        <position position="91"/>
    </location>
</feature>
<feature type="cross-link" description="Glycyl lysine isopeptide (Lys-Gly) (interchain with G-Cter in SUMO2); alternate" evidence="1">
    <location>
        <position position="94"/>
    </location>
</feature>
<feature type="cross-link" description="Glycyl lysine isopeptide (Lys-Gly) (interchain with G-Cter in SUMO2); alternate" evidence="1">
    <location>
        <position position="106"/>
    </location>
</feature>
<feature type="sequence conflict" description="In Ref. 1; AAA16796." evidence="3" ref="1">
    <original>D</original>
    <variation>H</variation>
    <location>
        <position position="104"/>
    </location>
</feature>
<dbReference type="EMBL" id="M76763">
    <property type="protein sequence ID" value="AAA16795.1"/>
    <property type="molecule type" value="mRNA"/>
</dbReference>
<dbReference type="EMBL" id="M76762">
    <property type="protein sequence ID" value="AAA16796.1"/>
    <property type="molecule type" value="Unassigned_DNA"/>
</dbReference>
<dbReference type="EMBL" id="AF100956">
    <property type="protein sequence ID" value="AAC69898.1"/>
    <property type="molecule type" value="Genomic_DNA"/>
</dbReference>
<dbReference type="EMBL" id="AF110520">
    <property type="protein sequence ID" value="AAC97978.1"/>
    <property type="molecule type" value="Genomic_DNA"/>
</dbReference>
<dbReference type="EMBL" id="AK050626">
    <property type="protein sequence ID" value="BAC34350.1"/>
    <property type="molecule type" value="mRNA"/>
</dbReference>
<dbReference type="EMBL" id="BC081459">
    <property type="protein sequence ID" value="AAH81459.1"/>
    <property type="molecule type" value="mRNA"/>
</dbReference>
<dbReference type="EMBL" id="BC081458">
    <property type="protein sequence ID" value="AAH81458.1"/>
    <property type="molecule type" value="mRNA"/>
</dbReference>
<dbReference type="CCDS" id="CCDS37573.1"/>
<dbReference type="PIR" id="I76666">
    <property type="entry name" value="I76666"/>
</dbReference>
<dbReference type="RefSeq" id="NP_035426.1">
    <property type="nucleotide sequence ID" value="NM_011296.3"/>
</dbReference>
<dbReference type="PDB" id="7CPU">
    <property type="method" value="EM"/>
    <property type="resolution" value="2.82 A"/>
    <property type="chains" value="SS=1-152"/>
</dbReference>
<dbReference type="PDB" id="7CPV">
    <property type="method" value="EM"/>
    <property type="resolution" value="3.03 A"/>
    <property type="chains" value="SS=1-152"/>
</dbReference>
<dbReference type="PDB" id="7LS1">
    <property type="method" value="EM"/>
    <property type="resolution" value="3.30 A"/>
    <property type="chains" value="A3=1-152"/>
</dbReference>
<dbReference type="PDB" id="7LS2">
    <property type="method" value="EM"/>
    <property type="resolution" value="3.10 A"/>
    <property type="chains" value="A3=1-152"/>
</dbReference>
<dbReference type="PDBsum" id="7CPU"/>
<dbReference type="PDBsum" id="7CPV"/>
<dbReference type="PDBsum" id="7LS1"/>
<dbReference type="PDBsum" id="7LS2"/>
<dbReference type="EMDB" id="EMD-23500"/>
<dbReference type="EMDB" id="EMD-23501"/>
<dbReference type="EMDB" id="EMD-30432"/>
<dbReference type="EMDB" id="EMD-30433"/>
<dbReference type="SMR" id="P62270"/>
<dbReference type="BioGRID" id="203006">
    <property type="interactions" value="96"/>
</dbReference>
<dbReference type="ComplexPortal" id="CPX-5261">
    <property type="entry name" value="40S cytosolic small ribosomal subunit"/>
</dbReference>
<dbReference type="FunCoup" id="P62270">
    <property type="interactions" value="2293"/>
</dbReference>
<dbReference type="IntAct" id="P62270">
    <property type="interactions" value="5"/>
</dbReference>
<dbReference type="MINT" id="P62270"/>
<dbReference type="STRING" id="10090.ENSMUSP00000008812"/>
<dbReference type="GlyGen" id="P62270">
    <property type="glycosylation" value="1 site, 1 O-linked glycan (1 site)"/>
</dbReference>
<dbReference type="iPTMnet" id="P62270"/>
<dbReference type="PhosphoSitePlus" id="P62270"/>
<dbReference type="SwissPalm" id="P62270"/>
<dbReference type="jPOST" id="P62270"/>
<dbReference type="PaxDb" id="10090-ENSMUSP00000008812"/>
<dbReference type="ProteomicsDB" id="299939"/>
<dbReference type="Pumba" id="P62270"/>
<dbReference type="Antibodypedia" id="53237">
    <property type="antibodies" value="183 antibodies from 26 providers"/>
</dbReference>
<dbReference type="Ensembl" id="ENSMUST00000008812.9">
    <property type="protein sequence ID" value="ENSMUSP00000008812.8"/>
    <property type="gene ID" value="ENSMUSG00000008668.16"/>
</dbReference>
<dbReference type="GeneID" id="20084"/>
<dbReference type="KEGG" id="mmu:20084"/>
<dbReference type="UCSC" id="uc008cak.1">
    <property type="organism name" value="mouse"/>
</dbReference>
<dbReference type="AGR" id="MGI:98146"/>
<dbReference type="CTD" id="6222"/>
<dbReference type="MGI" id="MGI:98146">
    <property type="gene designation" value="Rps18"/>
</dbReference>
<dbReference type="VEuPathDB" id="HostDB:ENSMUSG00000008668"/>
<dbReference type="eggNOG" id="KOG3311">
    <property type="taxonomic scope" value="Eukaryota"/>
</dbReference>
<dbReference type="GeneTree" id="ENSGT00390000012691"/>
<dbReference type="HOGENOM" id="CLU_103849_0_1_1"/>
<dbReference type="InParanoid" id="P62270"/>
<dbReference type="OMA" id="SYKGVRH"/>
<dbReference type="OrthoDB" id="1702480at2759"/>
<dbReference type="PhylomeDB" id="P62270"/>
<dbReference type="TreeFam" id="TF317649"/>
<dbReference type="Reactome" id="R-MMU-156827">
    <property type="pathway name" value="L13a-mediated translational silencing of Ceruloplasmin expression"/>
</dbReference>
<dbReference type="Reactome" id="R-MMU-1799339">
    <property type="pathway name" value="SRP-dependent cotranslational protein targeting to membrane"/>
</dbReference>
<dbReference type="Reactome" id="R-MMU-6791226">
    <property type="pathway name" value="Major pathway of rRNA processing in the nucleolus and cytosol"/>
</dbReference>
<dbReference type="Reactome" id="R-MMU-72649">
    <property type="pathway name" value="Translation initiation complex formation"/>
</dbReference>
<dbReference type="Reactome" id="R-MMU-72689">
    <property type="pathway name" value="Formation of a pool of free 40S subunits"/>
</dbReference>
<dbReference type="Reactome" id="R-MMU-72695">
    <property type="pathway name" value="Formation of the ternary complex, and subsequently, the 43S complex"/>
</dbReference>
<dbReference type="Reactome" id="R-MMU-72702">
    <property type="pathway name" value="Ribosomal scanning and start codon recognition"/>
</dbReference>
<dbReference type="Reactome" id="R-MMU-72706">
    <property type="pathway name" value="GTP hydrolysis and joining of the 60S ribosomal subunit"/>
</dbReference>
<dbReference type="Reactome" id="R-MMU-975956">
    <property type="pathway name" value="Nonsense Mediated Decay (NMD) independent of the Exon Junction Complex (EJC)"/>
</dbReference>
<dbReference type="Reactome" id="R-MMU-975957">
    <property type="pathway name" value="Nonsense Mediated Decay (NMD) enhanced by the Exon Junction Complex (EJC)"/>
</dbReference>
<dbReference type="BioGRID-ORCS" id="20084">
    <property type="hits" value="26 hits in 59 CRISPR screens"/>
</dbReference>
<dbReference type="CD-CODE" id="CE726F99">
    <property type="entry name" value="Postsynaptic density"/>
</dbReference>
<dbReference type="ChiTaRS" id="Rps18">
    <property type="organism name" value="mouse"/>
</dbReference>
<dbReference type="PRO" id="PR:P62270"/>
<dbReference type="Proteomes" id="UP000000589">
    <property type="component" value="Chromosome 17"/>
</dbReference>
<dbReference type="RNAct" id="P62270">
    <property type="molecule type" value="protein"/>
</dbReference>
<dbReference type="Bgee" id="ENSMUSG00000008668">
    <property type="expression patterns" value="Expressed in ventricular zone and 122 other cell types or tissues"/>
</dbReference>
<dbReference type="ExpressionAtlas" id="P62270">
    <property type="expression patterns" value="baseline and differential"/>
</dbReference>
<dbReference type="GO" id="GO:0005737">
    <property type="term" value="C:cytoplasm"/>
    <property type="evidence" value="ECO:0000303"/>
    <property type="project" value="ComplexPortal"/>
</dbReference>
<dbReference type="GO" id="GO:0005829">
    <property type="term" value="C:cytosol"/>
    <property type="evidence" value="ECO:0000304"/>
    <property type="project" value="Reactome"/>
</dbReference>
<dbReference type="GO" id="GO:0022627">
    <property type="term" value="C:cytosolic small ribosomal subunit"/>
    <property type="evidence" value="ECO:0000314"/>
    <property type="project" value="UniProtKB"/>
</dbReference>
<dbReference type="GO" id="GO:0005634">
    <property type="term" value="C:nucleus"/>
    <property type="evidence" value="ECO:0007669"/>
    <property type="project" value="Ensembl"/>
</dbReference>
<dbReference type="GO" id="GO:0098794">
    <property type="term" value="C:postsynapse"/>
    <property type="evidence" value="ECO:0000303"/>
    <property type="project" value="SynGO"/>
</dbReference>
<dbReference type="GO" id="GO:0014069">
    <property type="term" value="C:postsynaptic density"/>
    <property type="evidence" value="ECO:0007669"/>
    <property type="project" value="Ensembl"/>
</dbReference>
<dbReference type="GO" id="GO:0005840">
    <property type="term" value="C:ribosome"/>
    <property type="evidence" value="ECO:0000303"/>
    <property type="project" value="SynGO"/>
</dbReference>
<dbReference type="GO" id="GO:0045202">
    <property type="term" value="C:synapse"/>
    <property type="evidence" value="ECO:0000314"/>
    <property type="project" value="SynGO"/>
</dbReference>
<dbReference type="GO" id="GO:0019843">
    <property type="term" value="F:rRNA binding"/>
    <property type="evidence" value="ECO:0007669"/>
    <property type="project" value="UniProtKB-KW"/>
</dbReference>
<dbReference type="GO" id="GO:0003735">
    <property type="term" value="F:structural constituent of ribosome"/>
    <property type="evidence" value="ECO:0000314"/>
    <property type="project" value="UniProtKB"/>
</dbReference>
<dbReference type="GO" id="GO:0002181">
    <property type="term" value="P:cytoplasmic translation"/>
    <property type="evidence" value="ECO:0000303"/>
    <property type="project" value="ComplexPortal"/>
</dbReference>
<dbReference type="FunFam" id="1.10.8.50:FF:000002">
    <property type="entry name" value="40S ribosomal protein S18"/>
    <property type="match status" value="1"/>
</dbReference>
<dbReference type="FunFam" id="4.10.910.10:FF:000002">
    <property type="entry name" value="40S ribosomal protein S18"/>
    <property type="match status" value="1"/>
</dbReference>
<dbReference type="Gene3D" id="1.10.8.50">
    <property type="match status" value="1"/>
</dbReference>
<dbReference type="Gene3D" id="4.10.910.10">
    <property type="entry name" value="30s ribosomal protein s13, domain 2"/>
    <property type="match status" value="1"/>
</dbReference>
<dbReference type="HAMAP" id="MF_01315">
    <property type="entry name" value="Ribosomal_uS13"/>
    <property type="match status" value="1"/>
</dbReference>
<dbReference type="InterPro" id="IPR027437">
    <property type="entry name" value="Rbsml_uS13_C"/>
</dbReference>
<dbReference type="InterPro" id="IPR001892">
    <property type="entry name" value="Ribosomal_uS13"/>
</dbReference>
<dbReference type="InterPro" id="IPR010979">
    <property type="entry name" value="Ribosomal_uS13-like_H2TH"/>
</dbReference>
<dbReference type="InterPro" id="IPR018269">
    <property type="entry name" value="Ribosomal_uS13_CS"/>
</dbReference>
<dbReference type="NCBIfam" id="NF003140">
    <property type="entry name" value="PRK04053.1"/>
    <property type="match status" value="1"/>
</dbReference>
<dbReference type="PANTHER" id="PTHR10871">
    <property type="entry name" value="30S RIBOSOMAL PROTEIN S13/40S RIBOSOMAL PROTEIN S18"/>
    <property type="match status" value="1"/>
</dbReference>
<dbReference type="PANTHER" id="PTHR10871:SF42">
    <property type="entry name" value="SMALL RIBOSOMAL SUBUNIT PROTEIN US13"/>
    <property type="match status" value="1"/>
</dbReference>
<dbReference type="Pfam" id="PF00416">
    <property type="entry name" value="Ribosomal_S13"/>
    <property type="match status" value="1"/>
</dbReference>
<dbReference type="PIRSF" id="PIRSF002134">
    <property type="entry name" value="Ribosomal_S13"/>
    <property type="match status" value="1"/>
</dbReference>
<dbReference type="SUPFAM" id="SSF46946">
    <property type="entry name" value="S13-like H2TH domain"/>
    <property type="match status" value="1"/>
</dbReference>
<dbReference type="PROSITE" id="PS00646">
    <property type="entry name" value="RIBOSOMAL_S13_1"/>
    <property type="match status" value="1"/>
</dbReference>
<dbReference type="PROSITE" id="PS50159">
    <property type="entry name" value="RIBOSOMAL_S13_2"/>
    <property type="match status" value="1"/>
</dbReference>
<protein>
    <recommendedName>
        <fullName evidence="3">Small ribosomal subunit protein uS13</fullName>
    </recommendedName>
    <alternativeName>
        <fullName>40S ribosomal protein S18</fullName>
    </alternativeName>
    <alternativeName>
        <fullName>Ke-3</fullName>
        <shortName>Ke3</shortName>
    </alternativeName>
</protein>
<sequence length="152" mass="17719">MSLVIPEKFQHILRVLNTNIDGRRKIAFAITAIKGVGRRYAHVVLRKADIDLTKRAGELTEDEVERVITIMQNPRQYKIPDWFLNRQKDVKDGKYSQVLANGLDNKLREDLERLKKIRAHRGLRHFWGLRVRGQHTKTTGRRGRTVGVSKKK</sequence>
<organism>
    <name type="scientific">Mus musculus</name>
    <name type="common">Mouse</name>
    <dbReference type="NCBI Taxonomy" id="10090"/>
    <lineage>
        <taxon>Eukaryota</taxon>
        <taxon>Metazoa</taxon>
        <taxon>Chordata</taxon>
        <taxon>Craniata</taxon>
        <taxon>Vertebrata</taxon>
        <taxon>Euteleostomi</taxon>
        <taxon>Mammalia</taxon>
        <taxon>Eutheria</taxon>
        <taxon>Euarchontoglires</taxon>
        <taxon>Glires</taxon>
        <taxon>Rodentia</taxon>
        <taxon>Myomorpha</taxon>
        <taxon>Muroidea</taxon>
        <taxon>Muridae</taxon>
        <taxon>Murinae</taxon>
        <taxon>Mus</taxon>
        <taxon>Mus</taxon>
    </lineage>
</organism>
<keyword id="KW-0002">3D-structure</keyword>
<keyword id="KW-0007">Acetylation</keyword>
<keyword id="KW-0963">Cytoplasm</keyword>
<keyword id="KW-1017">Isopeptide bond</keyword>
<keyword id="KW-1185">Reference proteome</keyword>
<keyword id="KW-0687">Ribonucleoprotein</keyword>
<keyword id="KW-0689">Ribosomal protein</keyword>
<keyword id="KW-0694">RNA-binding</keyword>
<keyword id="KW-0699">rRNA-binding</keyword>
<keyword id="KW-0832">Ubl conjugation</keyword>
<name>RS18_MOUSE</name>
<comment type="function">
    <text evidence="2">Component of the small ribosomal subunit (PubMed:36517592). The ribosome is a large ribonucleoprotein complex responsible for the synthesis of proteins in the cell (PubMed:36517592).</text>
</comment>
<comment type="subunit">
    <text evidence="2">Component of the small ribosomal subunit.</text>
</comment>
<comment type="interaction">
    <interactant intactId="EBI-352460">
        <id>P62270</id>
    </interactant>
    <interactant intactId="EBI-1790419">
        <id>P70677</id>
        <label>Casp3</label>
    </interactant>
    <organismsDiffer>false</organismsDiffer>
    <experiments>5</experiments>
</comment>
<comment type="interaction">
    <interactant intactId="EBI-352460">
        <id>P62270</id>
    </interactant>
    <interactant intactId="EBI-5307197">
        <id>P97864</id>
        <label>Casp7</label>
    </interactant>
    <organismsDiffer>false</organismsDiffer>
    <experiments>4</experiments>
</comment>
<comment type="subcellular location">
    <subcellularLocation>
        <location evidence="2">Cytoplasm</location>
    </subcellularLocation>
</comment>
<comment type="similarity">
    <text evidence="3">Belongs to the universal ribosomal protein uS13 family.</text>
</comment>
<accession>P62270</accession>
<accession>P25232</accession>
<reference key="1">
    <citation type="journal article" date="1992" name="Mamm. Genome">
        <title>The murine MHC encodes a mammalian homolog of bacterial ribosomal protein S13.</title>
        <authorList>
            <person name="Macmurray A.J."/>
            <person name="Shin H.S."/>
        </authorList>
    </citation>
    <scope>NUCLEOTIDE SEQUENCE [MRNA]</scope>
</reference>
<reference key="2">
    <citation type="submission" date="1998-10" db="EMBL/GenBank/DDBJ databases">
        <title>Sequence of the mouse major histocomaptibility locus class II region.</title>
        <authorList>
            <person name="Rowen L."/>
            <person name="Qin S."/>
            <person name="Madan A."/>
            <person name="Loretz C."/>
            <person name="James R."/>
            <person name="Dors M."/>
            <person name="Mix L."/>
            <person name="Hall J."/>
            <person name="Lasky S."/>
            <person name="Hood L."/>
        </authorList>
    </citation>
    <scope>NUCLEOTIDE SEQUENCE [LARGE SCALE GENOMIC DNA]</scope>
    <source>
        <strain>129/SvJ</strain>
    </source>
</reference>
<reference key="3">
    <citation type="journal article" date="2005" name="Science">
        <title>The transcriptional landscape of the mammalian genome.</title>
        <authorList>
            <person name="Carninci P."/>
            <person name="Kasukawa T."/>
            <person name="Katayama S."/>
            <person name="Gough J."/>
            <person name="Frith M.C."/>
            <person name="Maeda N."/>
            <person name="Oyama R."/>
            <person name="Ravasi T."/>
            <person name="Lenhard B."/>
            <person name="Wells C."/>
            <person name="Kodzius R."/>
            <person name="Shimokawa K."/>
            <person name="Bajic V.B."/>
            <person name="Brenner S.E."/>
            <person name="Batalov S."/>
            <person name="Forrest A.R."/>
            <person name="Zavolan M."/>
            <person name="Davis M.J."/>
            <person name="Wilming L.G."/>
            <person name="Aidinis V."/>
            <person name="Allen J.E."/>
            <person name="Ambesi-Impiombato A."/>
            <person name="Apweiler R."/>
            <person name="Aturaliya R.N."/>
            <person name="Bailey T.L."/>
            <person name="Bansal M."/>
            <person name="Baxter L."/>
            <person name="Beisel K.W."/>
            <person name="Bersano T."/>
            <person name="Bono H."/>
            <person name="Chalk A.M."/>
            <person name="Chiu K.P."/>
            <person name="Choudhary V."/>
            <person name="Christoffels A."/>
            <person name="Clutterbuck D.R."/>
            <person name="Crowe M.L."/>
            <person name="Dalla E."/>
            <person name="Dalrymple B.P."/>
            <person name="de Bono B."/>
            <person name="Della Gatta G."/>
            <person name="di Bernardo D."/>
            <person name="Down T."/>
            <person name="Engstrom P."/>
            <person name="Fagiolini M."/>
            <person name="Faulkner G."/>
            <person name="Fletcher C.F."/>
            <person name="Fukushima T."/>
            <person name="Furuno M."/>
            <person name="Futaki S."/>
            <person name="Gariboldi M."/>
            <person name="Georgii-Hemming P."/>
            <person name="Gingeras T.R."/>
            <person name="Gojobori T."/>
            <person name="Green R.E."/>
            <person name="Gustincich S."/>
            <person name="Harbers M."/>
            <person name="Hayashi Y."/>
            <person name="Hensch T.K."/>
            <person name="Hirokawa N."/>
            <person name="Hill D."/>
            <person name="Huminiecki L."/>
            <person name="Iacono M."/>
            <person name="Ikeo K."/>
            <person name="Iwama A."/>
            <person name="Ishikawa T."/>
            <person name="Jakt M."/>
            <person name="Kanapin A."/>
            <person name="Katoh M."/>
            <person name="Kawasawa Y."/>
            <person name="Kelso J."/>
            <person name="Kitamura H."/>
            <person name="Kitano H."/>
            <person name="Kollias G."/>
            <person name="Krishnan S.P."/>
            <person name="Kruger A."/>
            <person name="Kummerfeld S.K."/>
            <person name="Kurochkin I.V."/>
            <person name="Lareau L.F."/>
            <person name="Lazarevic D."/>
            <person name="Lipovich L."/>
            <person name="Liu J."/>
            <person name="Liuni S."/>
            <person name="McWilliam S."/>
            <person name="Madan Babu M."/>
            <person name="Madera M."/>
            <person name="Marchionni L."/>
            <person name="Matsuda H."/>
            <person name="Matsuzawa S."/>
            <person name="Miki H."/>
            <person name="Mignone F."/>
            <person name="Miyake S."/>
            <person name="Morris K."/>
            <person name="Mottagui-Tabar S."/>
            <person name="Mulder N."/>
            <person name="Nakano N."/>
            <person name="Nakauchi H."/>
            <person name="Ng P."/>
            <person name="Nilsson R."/>
            <person name="Nishiguchi S."/>
            <person name="Nishikawa S."/>
            <person name="Nori F."/>
            <person name="Ohara O."/>
            <person name="Okazaki Y."/>
            <person name="Orlando V."/>
            <person name="Pang K.C."/>
            <person name="Pavan W.J."/>
            <person name="Pavesi G."/>
            <person name="Pesole G."/>
            <person name="Petrovsky N."/>
            <person name="Piazza S."/>
            <person name="Reed J."/>
            <person name="Reid J.F."/>
            <person name="Ring B.Z."/>
            <person name="Ringwald M."/>
            <person name="Rost B."/>
            <person name="Ruan Y."/>
            <person name="Salzberg S.L."/>
            <person name="Sandelin A."/>
            <person name="Schneider C."/>
            <person name="Schoenbach C."/>
            <person name="Sekiguchi K."/>
            <person name="Semple C.A."/>
            <person name="Seno S."/>
            <person name="Sessa L."/>
            <person name="Sheng Y."/>
            <person name="Shibata Y."/>
            <person name="Shimada H."/>
            <person name="Shimada K."/>
            <person name="Silva D."/>
            <person name="Sinclair B."/>
            <person name="Sperling S."/>
            <person name="Stupka E."/>
            <person name="Sugiura K."/>
            <person name="Sultana R."/>
            <person name="Takenaka Y."/>
            <person name="Taki K."/>
            <person name="Tammoja K."/>
            <person name="Tan S.L."/>
            <person name="Tang S."/>
            <person name="Taylor M.S."/>
            <person name="Tegner J."/>
            <person name="Teichmann S.A."/>
            <person name="Ueda H.R."/>
            <person name="van Nimwegen E."/>
            <person name="Verardo R."/>
            <person name="Wei C.L."/>
            <person name="Yagi K."/>
            <person name="Yamanishi H."/>
            <person name="Zabarovsky E."/>
            <person name="Zhu S."/>
            <person name="Zimmer A."/>
            <person name="Hide W."/>
            <person name="Bult C."/>
            <person name="Grimmond S.M."/>
            <person name="Teasdale R.D."/>
            <person name="Liu E.T."/>
            <person name="Brusic V."/>
            <person name="Quackenbush J."/>
            <person name="Wahlestedt C."/>
            <person name="Mattick J.S."/>
            <person name="Hume D.A."/>
            <person name="Kai C."/>
            <person name="Sasaki D."/>
            <person name="Tomaru Y."/>
            <person name="Fukuda S."/>
            <person name="Kanamori-Katayama M."/>
            <person name="Suzuki M."/>
            <person name="Aoki J."/>
            <person name="Arakawa T."/>
            <person name="Iida J."/>
            <person name="Imamura K."/>
            <person name="Itoh M."/>
            <person name="Kato T."/>
            <person name="Kawaji H."/>
            <person name="Kawagashira N."/>
            <person name="Kawashima T."/>
            <person name="Kojima M."/>
            <person name="Kondo S."/>
            <person name="Konno H."/>
            <person name="Nakano K."/>
            <person name="Ninomiya N."/>
            <person name="Nishio T."/>
            <person name="Okada M."/>
            <person name="Plessy C."/>
            <person name="Shibata K."/>
            <person name="Shiraki T."/>
            <person name="Suzuki S."/>
            <person name="Tagami M."/>
            <person name="Waki K."/>
            <person name="Watahiki A."/>
            <person name="Okamura-Oho Y."/>
            <person name="Suzuki H."/>
            <person name="Kawai J."/>
            <person name="Hayashizaki Y."/>
        </authorList>
    </citation>
    <scope>NUCLEOTIDE SEQUENCE [LARGE SCALE MRNA]</scope>
    <source>
        <strain>C57BL/6J</strain>
        <tissue>Thymus</tissue>
    </source>
</reference>
<reference key="4">
    <citation type="journal article" date="2004" name="Genome Res.">
        <title>The status, quality, and expansion of the NIH full-length cDNA project: the Mammalian Gene Collection (MGC).</title>
        <authorList>
            <consortium name="The MGC Project Team"/>
        </authorList>
    </citation>
    <scope>NUCLEOTIDE SEQUENCE [LARGE SCALE MRNA]</scope>
    <source>
        <strain>C57BL/6J</strain>
        <tissue>Brain</tissue>
    </source>
</reference>
<reference evidence="4 5" key="5">
    <citation type="journal article" date="2022" name="Nature">
        <title>A male germ-cell-specific ribosome controls male fertility.</title>
        <authorList>
            <person name="Li H."/>
            <person name="Huo Y."/>
            <person name="He X."/>
            <person name="Yao L."/>
            <person name="Zhang H."/>
            <person name="Cui Y."/>
            <person name="Xiao H."/>
            <person name="Xie W."/>
            <person name="Zhang D."/>
            <person name="Wang Y."/>
            <person name="Zhang S."/>
            <person name="Tu H."/>
            <person name="Cheng Y."/>
            <person name="Guo Y."/>
            <person name="Cao X."/>
            <person name="Zhu Y."/>
            <person name="Jiang T."/>
            <person name="Guo X."/>
            <person name="Qin Y."/>
            <person name="Sha J."/>
        </authorList>
    </citation>
    <scope>STRUCTURE BY ELECTRON MICROSCOPY (3.03 ANGSTROMS) OF RIBOSOME</scope>
    <scope>FUNCTION</scope>
    <scope>SUBUNIT</scope>
    <scope>SUBCELLULAR LOCATION</scope>
</reference>
<gene>
    <name type="primary">Rps18</name>
</gene>
<evidence type="ECO:0000250" key="1">
    <source>
        <dbReference type="UniProtKB" id="P62269"/>
    </source>
</evidence>
<evidence type="ECO:0000269" key="2">
    <source>
    </source>
</evidence>
<evidence type="ECO:0000305" key="3"/>
<evidence type="ECO:0007744" key="4">
    <source>
        <dbReference type="PDB" id="7CPU"/>
    </source>
</evidence>
<evidence type="ECO:0007744" key="5">
    <source>
        <dbReference type="PDB" id="7CPV"/>
    </source>
</evidence>